<proteinExistence type="evidence at protein level"/>
<gene>
    <name type="primary">Nrbf2</name>
</gene>
<comment type="function">
    <text evidence="2">May modulate transcriptional activation by target nuclear receptors. Can act as transcriptional activator (in vitro) (By similarity).</text>
</comment>
<comment type="function">
    <text evidence="2 6 7">Involved in starvation-induced autophagy probably by its association with PI3K complex I (PI3KC3-C1). However, effects has been described variably. Involved in the induction of starvation-induced autophagy (By similarity). Stabilizes PI3KC3-C1 assembly and enhances ATG14-linked lipid kinase activity of PIK3C3 (PubMed:24849286). Proposed to negatively regulate basal and starvation-induced autophagy and to inhibit PIK3C3 activity by modulating interactions in PI3KC3-C1 (By similarity). May be involved in autophagosome biogenesis (By similarity). May play a role in neural progenitor cell survival during differentiation (PubMed:18619852).</text>
</comment>
<comment type="function">
    <text evidence="2 6 7">Involved in the induction of starvation-induced autophagy. Modulates ATG14-linked lipid kinase activity of PIK3C3 and stabilizes PI3K complex I (PI3KC3-C1) assembly (PubMed:24849286). May play a role in neural progenitor cell survival during differentiation (PubMed:18619852).</text>
</comment>
<comment type="subunit">
    <text evidence="2 7">Interacts with RRARA, PPARD and PPARG. Interacts with THRB, RARA, RARG and RXRA in the presence of bound ligand (By similarity). Interacts with SCOC (By similarity). Associates with the PI3K complex I (PI3KC3-C1); the direct binding partner in the complex is reported variably as PIK3R4 or ATG14 (PubMed:24849286).</text>
</comment>
<comment type="interaction">
    <interactant intactId="EBI-2365563">
        <id>Q8VCQ3</id>
    </interactant>
    <interactant intactId="EBI-3506699">
        <id>Q8CDJ3</id>
        <label>Atg14</label>
    </interactant>
    <organismsDiffer>false</organismsDiffer>
    <experiments>7</experiments>
</comment>
<comment type="interaction">
    <interactant intactId="EBI-2365563">
        <id>Q8VCQ3</id>
    </interactant>
    <interactant intactId="EBI-643716">
        <id>O88597</id>
        <label>Becn1</label>
    </interactant>
    <organismsDiffer>false</organismsDiffer>
    <experiments>5</experiments>
</comment>
<comment type="interaction">
    <interactant intactId="EBI-2365563">
        <id>Q8VCQ3</id>
    </interactant>
    <interactant intactId="EBI-48419629">
        <id>Q8C1Y8</id>
        <label>Ccz1</label>
    </interactant>
    <organismsDiffer>false</organismsDiffer>
    <experiments>3</experiments>
</comment>
<comment type="subcellular location">
    <subcellularLocation>
        <location evidence="3">Nucleus</location>
    </subcellularLocation>
    <subcellularLocation>
        <location evidence="6">Cytoplasm</location>
    </subcellularLocation>
    <subcellularLocation>
        <location evidence="8">Cytoplasmic vesicle</location>
        <location evidence="8">Autophagosome</location>
    </subcellularLocation>
</comment>
<comment type="developmental stage">
    <text evidence="6">During embryonic brain development detected in the cerebral cortex at 14 dpc; expressed in the walls of the third and fourth ventricles, and in the hippocampus. In the adult brain, predominantly expressed in Purkinje cells of the cerebellum and neurons in the CA3 region of the hippocampus (PubMed:18619852).</text>
</comment>
<keyword id="KW-0002">3D-structure</keyword>
<keyword id="KW-0072">Autophagy</keyword>
<keyword id="KW-0175">Coiled coil</keyword>
<keyword id="KW-0963">Cytoplasm</keyword>
<keyword id="KW-0968">Cytoplasmic vesicle</keyword>
<keyword id="KW-0539">Nucleus</keyword>
<keyword id="KW-0597">Phosphoprotein</keyword>
<keyword id="KW-1185">Reference proteome</keyword>
<keyword id="KW-0804">Transcription</keyword>
<keyword id="KW-0805">Transcription regulation</keyword>
<sequence length="287" mass="32501">MEVMEGPLNLAHQQSRRADRLLAAGKYEEAISCHRKATTYLSEAMKLTESEQAHLSLELQRDSHMKQLLLIQERWKRAKREERLKAQQSTERDGAPHLQAPPRPSEDAEGQSPLLSQPYIPSTERRLPEVQGVFDRDPDTLLFLLQQKNEPSEPCIGSKAPKDDKTIIEEQATKIADLKRHVEFLVAENERLRKENKQLKAEKARLLKGTAEKELDVDADFVEKSELWGLPSHSESAAASSTWQKFAANTGKAKDIPIPNLPPLDFPSPELPLMELSEDILKGFMND</sequence>
<protein>
    <recommendedName>
        <fullName>Nuclear receptor-binding factor 2</fullName>
        <shortName>NRBF-2</shortName>
    </recommendedName>
</protein>
<reference key="1">
    <citation type="journal article" date="2005" name="Science">
        <title>The transcriptional landscape of the mammalian genome.</title>
        <authorList>
            <person name="Carninci P."/>
            <person name="Kasukawa T."/>
            <person name="Katayama S."/>
            <person name="Gough J."/>
            <person name="Frith M.C."/>
            <person name="Maeda N."/>
            <person name="Oyama R."/>
            <person name="Ravasi T."/>
            <person name="Lenhard B."/>
            <person name="Wells C."/>
            <person name="Kodzius R."/>
            <person name="Shimokawa K."/>
            <person name="Bajic V.B."/>
            <person name="Brenner S.E."/>
            <person name="Batalov S."/>
            <person name="Forrest A.R."/>
            <person name="Zavolan M."/>
            <person name="Davis M.J."/>
            <person name="Wilming L.G."/>
            <person name="Aidinis V."/>
            <person name="Allen J.E."/>
            <person name="Ambesi-Impiombato A."/>
            <person name="Apweiler R."/>
            <person name="Aturaliya R.N."/>
            <person name="Bailey T.L."/>
            <person name="Bansal M."/>
            <person name="Baxter L."/>
            <person name="Beisel K.W."/>
            <person name="Bersano T."/>
            <person name="Bono H."/>
            <person name="Chalk A.M."/>
            <person name="Chiu K.P."/>
            <person name="Choudhary V."/>
            <person name="Christoffels A."/>
            <person name="Clutterbuck D.R."/>
            <person name="Crowe M.L."/>
            <person name="Dalla E."/>
            <person name="Dalrymple B.P."/>
            <person name="de Bono B."/>
            <person name="Della Gatta G."/>
            <person name="di Bernardo D."/>
            <person name="Down T."/>
            <person name="Engstrom P."/>
            <person name="Fagiolini M."/>
            <person name="Faulkner G."/>
            <person name="Fletcher C.F."/>
            <person name="Fukushima T."/>
            <person name="Furuno M."/>
            <person name="Futaki S."/>
            <person name="Gariboldi M."/>
            <person name="Georgii-Hemming P."/>
            <person name="Gingeras T.R."/>
            <person name="Gojobori T."/>
            <person name="Green R.E."/>
            <person name="Gustincich S."/>
            <person name="Harbers M."/>
            <person name="Hayashi Y."/>
            <person name="Hensch T.K."/>
            <person name="Hirokawa N."/>
            <person name="Hill D."/>
            <person name="Huminiecki L."/>
            <person name="Iacono M."/>
            <person name="Ikeo K."/>
            <person name="Iwama A."/>
            <person name="Ishikawa T."/>
            <person name="Jakt M."/>
            <person name="Kanapin A."/>
            <person name="Katoh M."/>
            <person name="Kawasawa Y."/>
            <person name="Kelso J."/>
            <person name="Kitamura H."/>
            <person name="Kitano H."/>
            <person name="Kollias G."/>
            <person name="Krishnan S.P."/>
            <person name="Kruger A."/>
            <person name="Kummerfeld S.K."/>
            <person name="Kurochkin I.V."/>
            <person name="Lareau L.F."/>
            <person name="Lazarevic D."/>
            <person name="Lipovich L."/>
            <person name="Liu J."/>
            <person name="Liuni S."/>
            <person name="McWilliam S."/>
            <person name="Madan Babu M."/>
            <person name="Madera M."/>
            <person name="Marchionni L."/>
            <person name="Matsuda H."/>
            <person name="Matsuzawa S."/>
            <person name="Miki H."/>
            <person name="Mignone F."/>
            <person name="Miyake S."/>
            <person name="Morris K."/>
            <person name="Mottagui-Tabar S."/>
            <person name="Mulder N."/>
            <person name="Nakano N."/>
            <person name="Nakauchi H."/>
            <person name="Ng P."/>
            <person name="Nilsson R."/>
            <person name="Nishiguchi S."/>
            <person name="Nishikawa S."/>
            <person name="Nori F."/>
            <person name="Ohara O."/>
            <person name="Okazaki Y."/>
            <person name="Orlando V."/>
            <person name="Pang K.C."/>
            <person name="Pavan W.J."/>
            <person name="Pavesi G."/>
            <person name="Pesole G."/>
            <person name="Petrovsky N."/>
            <person name="Piazza S."/>
            <person name="Reed J."/>
            <person name="Reid J.F."/>
            <person name="Ring B.Z."/>
            <person name="Ringwald M."/>
            <person name="Rost B."/>
            <person name="Ruan Y."/>
            <person name="Salzberg S.L."/>
            <person name="Sandelin A."/>
            <person name="Schneider C."/>
            <person name="Schoenbach C."/>
            <person name="Sekiguchi K."/>
            <person name="Semple C.A."/>
            <person name="Seno S."/>
            <person name="Sessa L."/>
            <person name="Sheng Y."/>
            <person name="Shibata Y."/>
            <person name="Shimada H."/>
            <person name="Shimada K."/>
            <person name="Silva D."/>
            <person name="Sinclair B."/>
            <person name="Sperling S."/>
            <person name="Stupka E."/>
            <person name="Sugiura K."/>
            <person name="Sultana R."/>
            <person name="Takenaka Y."/>
            <person name="Taki K."/>
            <person name="Tammoja K."/>
            <person name="Tan S.L."/>
            <person name="Tang S."/>
            <person name="Taylor M.S."/>
            <person name="Tegner J."/>
            <person name="Teichmann S.A."/>
            <person name="Ueda H.R."/>
            <person name="van Nimwegen E."/>
            <person name="Verardo R."/>
            <person name="Wei C.L."/>
            <person name="Yagi K."/>
            <person name="Yamanishi H."/>
            <person name="Zabarovsky E."/>
            <person name="Zhu S."/>
            <person name="Zimmer A."/>
            <person name="Hide W."/>
            <person name="Bult C."/>
            <person name="Grimmond S.M."/>
            <person name="Teasdale R.D."/>
            <person name="Liu E.T."/>
            <person name="Brusic V."/>
            <person name="Quackenbush J."/>
            <person name="Wahlestedt C."/>
            <person name="Mattick J.S."/>
            <person name="Hume D.A."/>
            <person name="Kai C."/>
            <person name="Sasaki D."/>
            <person name="Tomaru Y."/>
            <person name="Fukuda S."/>
            <person name="Kanamori-Katayama M."/>
            <person name="Suzuki M."/>
            <person name="Aoki J."/>
            <person name="Arakawa T."/>
            <person name="Iida J."/>
            <person name="Imamura K."/>
            <person name="Itoh M."/>
            <person name="Kato T."/>
            <person name="Kawaji H."/>
            <person name="Kawagashira N."/>
            <person name="Kawashima T."/>
            <person name="Kojima M."/>
            <person name="Kondo S."/>
            <person name="Konno H."/>
            <person name="Nakano K."/>
            <person name="Ninomiya N."/>
            <person name="Nishio T."/>
            <person name="Okada M."/>
            <person name="Plessy C."/>
            <person name="Shibata K."/>
            <person name="Shiraki T."/>
            <person name="Suzuki S."/>
            <person name="Tagami M."/>
            <person name="Waki K."/>
            <person name="Watahiki A."/>
            <person name="Okamura-Oho Y."/>
            <person name="Suzuki H."/>
            <person name="Kawai J."/>
            <person name="Hayashizaki Y."/>
        </authorList>
    </citation>
    <scope>NUCLEOTIDE SEQUENCE [LARGE SCALE MRNA]</scope>
    <source>
        <strain>C57BL/6J</strain>
        <tissue>Kidney</tissue>
    </source>
</reference>
<reference key="2">
    <citation type="journal article" date="2004" name="Genome Res.">
        <title>The status, quality, and expansion of the NIH full-length cDNA project: the Mammalian Gene Collection (MGC).</title>
        <authorList>
            <consortium name="The MGC Project Team"/>
        </authorList>
    </citation>
    <scope>NUCLEOTIDE SEQUENCE [LARGE SCALE MRNA]</scope>
    <source>
        <strain>FVB/N</strain>
        <tissue>Liver</tissue>
    </source>
</reference>
<reference key="3">
    <citation type="journal article" date="2008" name="Mol. Cell. Neurosci.">
        <title>Nuclear receptor binding protein 2 is induced during neural progenitor differentiation and affects cell survival.</title>
        <authorList>
            <person name="Larsson J."/>
            <person name="Forsberg M."/>
            <person name="Brannvall K."/>
            <person name="Zhang X.Q."/>
            <person name="Enarsson M."/>
            <person name="Hedborg F."/>
            <person name="Forsberg-Nilsson K."/>
        </authorList>
    </citation>
    <scope>FUNCTION</scope>
    <scope>SUBCELLULAR LOCATION</scope>
    <scope>DEVELOPMENTAL STAGE</scope>
</reference>
<reference key="4">
    <citation type="journal article" date="2014" name="Nat. Commun.">
        <title>NRBF2 regulates autophagy and prevents liver injury by modulating Atg14L-linked phosphatidylinositol-3 kinase III activity.</title>
        <authorList>
            <person name="Lu J."/>
            <person name="He L."/>
            <person name="Behrends C."/>
            <person name="Araki M."/>
            <person name="Araki K."/>
            <person name="Jun Wang Q."/>
            <person name="Catanzaro J.M."/>
            <person name="Friedman S.L."/>
            <person name="Zong W.X."/>
            <person name="Fiel M.I."/>
            <person name="Li M."/>
            <person name="Yue Z."/>
        </authorList>
    </citation>
    <scope>FUNCTION</scope>
    <scope>INTERACTION WITH ATG14</scope>
    <scope>SUBUNIT</scope>
</reference>
<reference key="5">
    <citation type="submission" date="2005-11" db="PDB data bank">
        <title>Solution structure of MIT domain from mouse Nrbf-2.</title>
        <authorList>
            <consortium name="RIKEN structural genomics initiative (RSGI)"/>
        </authorList>
    </citation>
    <scope>STRUCTURE BY NMR OF 4-86</scope>
</reference>
<organism>
    <name type="scientific">Mus musculus</name>
    <name type="common">Mouse</name>
    <dbReference type="NCBI Taxonomy" id="10090"/>
    <lineage>
        <taxon>Eukaryota</taxon>
        <taxon>Metazoa</taxon>
        <taxon>Chordata</taxon>
        <taxon>Craniata</taxon>
        <taxon>Vertebrata</taxon>
        <taxon>Euteleostomi</taxon>
        <taxon>Mammalia</taxon>
        <taxon>Eutheria</taxon>
        <taxon>Euarchontoglires</taxon>
        <taxon>Glires</taxon>
        <taxon>Rodentia</taxon>
        <taxon>Myomorpha</taxon>
        <taxon>Muroidea</taxon>
        <taxon>Muridae</taxon>
        <taxon>Murinae</taxon>
        <taxon>Mus</taxon>
        <taxon>Mus</taxon>
    </lineage>
</organism>
<name>NRBF2_MOUSE</name>
<evidence type="ECO:0000250" key="1"/>
<evidence type="ECO:0000250" key="2">
    <source>
        <dbReference type="UniProtKB" id="Q96F24"/>
    </source>
</evidence>
<evidence type="ECO:0000250" key="3">
    <source>
        <dbReference type="UniProtKB" id="Q9QYK3"/>
    </source>
</evidence>
<evidence type="ECO:0000255" key="4"/>
<evidence type="ECO:0000256" key="5">
    <source>
        <dbReference type="SAM" id="MobiDB-lite"/>
    </source>
</evidence>
<evidence type="ECO:0000269" key="6">
    <source>
    </source>
</evidence>
<evidence type="ECO:0000269" key="7">
    <source>
    </source>
</evidence>
<evidence type="ECO:0000305" key="8"/>
<evidence type="ECO:0007829" key="9">
    <source>
        <dbReference type="PDB" id="2CRB"/>
    </source>
</evidence>
<feature type="chain" id="PRO_0000235817" description="Nuclear receptor-binding factor 2">
    <location>
        <begin position="1"/>
        <end position="287"/>
    </location>
</feature>
<feature type="region of interest" description="Disordered" evidence="5">
    <location>
        <begin position="81"/>
        <end position="122"/>
    </location>
</feature>
<feature type="coiled-coil region" evidence="4">
    <location>
        <begin position="168"/>
        <end position="215"/>
    </location>
</feature>
<feature type="short sequence motif" description="Nuclear receptor interaction motif" evidence="1">
    <location>
        <begin position="141"/>
        <end position="145"/>
    </location>
</feature>
<feature type="compositionally biased region" description="Basic and acidic residues" evidence="5">
    <location>
        <begin position="81"/>
        <end position="95"/>
    </location>
</feature>
<feature type="modified residue" description="Phosphoserine" evidence="2">
    <location>
        <position position="112"/>
    </location>
</feature>
<feature type="modified residue" description="Phosphoserine" evidence="2">
    <location>
        <position position="268"/>
    </location>
</feature>
<feature type="sequence conflict" description="In Ref. 1; BAB22375." evidence="8" ref="1">
    <original>K</original>
    <variation>E</variation>
    <location>
        <position position="203"/>
    </location>
</feature>
<feature type="sequence conflict" description="In Ref. 1; BAB22375." evidence="8" ref="1">
    <original>KFAANTGKAKDIPIPNLPPL</original>
    <variation>SLQLTRGSQGHSNTQPSSS</variation>
    <location>
        <begin position="245"/>
        <end position="264"/>
    </location>
</feature>
<feature type="helix" evidence="9">
    <location>
        <begin position="7"/>
        <end position="23"/>
    </location>
</feature>
<feature type="helix" evidence="9">
    <location>
        <begin position="27"/>
        <end position="45"/>
    </location>
</feature>
<feature type="helix" evidence="9">
    <location>
        <begin position="51"/>
        <end position="85"/>
    </location>
</feature>
<accession>Q8VCQ3</accession>
<accession>Q9DCG3</accession>
<dbReference type="EMBL" id="AK002810">
    <property type="protein sequence ID" value="BAB22375.1"/>
    <property type="molecule type" value="mRNA"/>
</dbReference>
<dbReference type="EMBL" id="BC019448">
    <property type="protein sequence ID" value="AAH19448.1"/>
    <property type="molecule type" value="mRNA"/>
</dbReference>
<dbReference type="CCDS" id="CCDS23902.1"/>
<dbReference type="RefSeq" id="NP_001031370.1">
    <property type="nucleotide sequence ID" value="NM_001036293.3"/>
</dbReference>
<dbReference type="PDB" id="2CRB">
    <property type="method" value="NMR"/>
    <property type="chains" value="A=4-87"/>
</dbReference>
<dbReference type="PDBsum" id="2CRB"/>
<dbReference type="SMR" id="Q8VCQ3"/>
<dbReference type="BioGRID" id="565935">
    <property type="interactions" value="2"/>
</dbReference>
<dbReference type="FunCoup" id="Q8VCQ3">
    <property type="interactions" value="913"/>
</dbReference>
<dbReference type="IntAct" id="Q8VCQ3">
    <property type="interactions" value="11"/>
</dbReference>
<dbReference type="MINT" id="Q8VCQ3"/>
<dbReference type="STRING" id="10090.ENSMUSP00000097254"/>
<dbReference type="iPTMnet" id="Q8VCQ3"/>
<dbReference type="PhosphoSitePlus" id="Q8VCQ3"/>
<dbReference type="PaxDb" id="10090-ENSMUSP00000097254"/>
<dbReference type="PeptideAtlas" id="Q8VCQ3"/>
<dbReference type="ProteomicsDB" id="293970"/>
<dbReference type="Pumba" id="Q8VCQ3"/>
<dbReference type="Antibodypedia" id="28311">
    <property type="antibodies" value="339 antibodies from 31 providers"/>
</dbReference>
<dbReference type="DNASU" id="641340"/>
<dbReference type="Ensembl" id="ENSMUST00000077839.13">
    <property type="protein sequence ID" value="ENSMUSP00000097254.4"/>
    <property type="gene ID" value="ENSMUSG00000075000.12"/>
</dbReference>
<dbReference type="GeneID" id="641340"/>
<dbReference type="KEGG" id="mmu:641340"/>
<dbReference type="UCSC" id="uc007flw.1">
    <property type="organism name" value="mouse"/>
</dbReference>
<dbReference type="AGR" id="MGI:1354950"/>
<dbReference type="CTD" id="29982"/>
<dbReference type="MGI" id="MGI:1354950">
    <property type="gene designation" value="Nrbf2"/>
</dbReference>
<dbReference type="VEuPathDB" id="HostDB:ENSMUSG00000075000"/>
<dbReference type="eggNOG" id="ENOG502SGH4">
    <property type="taxonomic scope" value="Eukaryota"/>
</dbReference>
<dbReference type="GeneTree" id="ENSGT00390000000984"/>
<dbReference type="HOGENOM" id="CLU_098323_0_0_1"/>
<dbReference type="InParanoid" id="Q8VCQ3"/>
<dbReference type="OMA" id="KCHETVA"/>
<dbReference type="OrthoDB" id="3694230at2759"/>
<dbReference type="PhylomeDB" id="Q8VCQ3"/>
<dbReference type="TreeFam" id="TF328627"/>
<dbReference type="Reactome" id="R-MMU-383280">
    <property type="pathway name" value="Nuclear Receptor transcription pathway"/>
</dbReference>
<dbReference type="BioGRID-ORCS" id="641340">
    <property type="hits" value="11 hits in 77 CRISPR screens"/>
</dbReference>
<dbReference type="ChiTaRS" id="Nrbf2">
    <property type="organism name" value="mouse"/>
</dbReference>
<dbReference type="EvolutionaryTrace" id="Q8VCQ3"/>
<dbReference type="PRO" id="PR:Q8VCQ3"/>
<dbReference type="Proteomes" id="UP000000589">
    <property type="component" value="Chromosome 10"/>
</dbReference>
<dbReference type="RNAct" id="Q8VCQ3">
    <property type="molecule type" value="protein"/>
</dbReference>
<dbReference type="Bgee" id="ENSMUSG00000075000">
    <property type="expression patterns" value="Expressed in hindlimb stylopod muscle and 64 other cell types or tissues"/>
</dbReference>
<dbReference type="ExpressionAtlas" id="Q8VCQ3">
    <property type="expression patterns" value="baseline and differential"/>
</dbReference>
<dbReference type="GO" id="GO:0005776">
    <property type="term" value="C:autophagosome"/>
    <property type="evidence" value="ECO:0007669"/>
    <property type="project" value="UniProtKB-SubCell"/>
</dbReference>
<dbReference type="GO" id="GO:0031410">
    <property type="term" value="C:cytoplasmic vesicle"/>
    <property type="evidence" value="ECO:0007669"/>
    <property type="project" value="UniProtKB-KW"/>
</dbReference>
<dbReference type="GO" id="GO:0005634">
    <property type="term" value="C:nucleus"/>
    <property type="evidence" value="ECO:0007669"/>
    <property type="project" value="UniProtKB-SubCell"/>
</dbReference>
<dbReference type="GO" id="GO:0035032">
    <property type="term" value="C:phosphatidylinositol 3-kinase complex, class III"/>
    <property type="evidence" value="ECO:0007669"/>
    <property type="project" value="Ensembl"/>
</dbReference>
<dbReference type="GO" id="GO:0005667">
    <property type="term" value="C:transcription regulator complex"/>
    <property type="evidence" value="ECO:0000266"/>
    <property type="project" value="MGI"/>
</dbReference>
<dbReference type="GO" id="GO:0016922">
    <property type="term" value="F:nuclear receptor binding"/>
    <property type="evidence" value="ECO:0000266"/>
    <property type="project" value="MGI"/>
</dbReference>
<dbReference type="GO" id="GO:0003713">
    <property type="term" value="F:transcription coactivator activity"/>
    <property type="evidence" value="ECO:0000266"/>
    <property type="project" value="MGI"/>
</dbReference>
<dbReference type="GO" id="GO:0006914">
    <property type="term" value="P:autophagy"/>
    <property type="evidence" value="ECO:0000315"/>
    <property type="project" value="GO_Central"/>
</dbReference>
<dbReference type="GO" id="GO:0043550">
    <property type="term" value="P:regulation of lipid kinase activity"/>
    <property type="evidence" value="ECO:0000315"/>
    <property type="project" value="UniProtKB"/>
</dbReference>
<dbReference type="GO" id="GO:0006357">
    <property type="term" value="P:regulation of transcription by RNA polymerase II"/>
    <property type="evidence" value="ECO:0000266"/>
    <property type="project" value="MGI"/>
</dbReference>
<dbReference type="GO" id="GO:0034976">
    <property type="term" value="P:response to endoplasmic reticulum stress"/>
    <property type="evidence" value="ECO:0000315"/>
    <property type="project" value="UniProtKB"/>
</dbReference>
<dbReference type="FunFam" id="1.20.58.80:FF:000018">
    <property type="entry name" value="nuclear receptor-binding factor 2 isoform X1"/>
    <property type="match status" value="1"/>
</dbReference>
<dbReference type="Gene3D" id="1.20.58.80">
    <property type="entry name" value="Phosphotransferase system, lactose/cellobiose-type IIA subunit"/>
    <property type="match status" value="1"/>
</dbReference>
<dbReference type="IDEAL" id="IID50293"/>
<dbReference type="InterPro" id="IPR039679">
    <property type="entry name" value="NRBF2"/>
</dbReference>
<dbReference type="InterPro" id="IPR015056">
    <property type="entry name" value="NRBF2_C"/>
</dbReference>
<dbReference type="InterPro" id="IPR033393">
    <property type="entry name" value="NRBF2_MIT"/>
</dbReference>
<dbReference type="PANTHER" id="PTHR14964">
    <property type="entry name" value="NUCLEAR RECEPTOR BINDING FACTOR 2"/>
    <property type="match status" value="1"/>
</dbReference>
<dbReference type="PANTHER" id="PTHR14964:SF2">
    <property type="entry name" value="NUCLEAR RECEPTOR-BINDING FACTOR 2"/>
    <property type="match status" value="1"/>
</dbReference>
<dbReference type="Pfam" id="PF08961">
    <property type="entry name" value="NRBF2"/>
    <property type="match status" value="1"/>
</dbReference>
<dbReference type="Pfam" id="PF17169">
    <property type="entry name" value="NRBF2_MIT"/>
    <property type="match status" value="1"/>
</dbReference>
<dbReference type="SUPFAM" id="SSF140361">
    <property type="entry name" value="MIT domain-like"/>
    <property type="match status" value="1"/>
</dbReference>